<keyword id="KW-0028">Amino-acid biosynthesis</keyword>
<keyword id="KW-0368">Histidine biosynthesis</keyword>
<keyword id="KW-0479">Metal-binding</keyword>
<keyword id="KW-0520">NAD</keyword>
<keyword id="KW-0560">Oxidoreductase</keyword>
<keyword id="KW-1185">Reference proteome</keyword>
<keyword id="KW-0862">Zinc</keyword>
<accession>Q3IQR5</accession>
<protein>
    <recommendedName>
        <fullName evidence="1">Histidinol dehydrogenase</fullName>
        <shortName evidence="1">HDH</shortName>
        <ecNumber evidence="1">1.1.1.23</ecNumber>
    </recommendedName>
</protein>
<organism>
    <name type="scientific">Natronomonas pharaonis (strain ATCC 35678 / DSM 2160 / CIP 103997 / JCM 8858 / NBRC 14720 / NCIMB 2260 / Gabara)</name>
    <name type="common">Halobacterium pharaonis</name>
    <dbReference type="NCBI Taxonomy" id="348780"/>
    <lineage>
        <taxon>Archaea</taxon>
        <taxon>Methanobacteriati</taxon>
        <taxon>Methanobacteriota</taxon>
        <taxon>Stenosarchaea group</taxon>
        <taxon>Halobacteria</taxon>
        <taxon>Halobacteriales</taxon>
        <taxon>Haloarculaceae</taxon>
        <taxon>Natronomonas</taxon>
    </lineage>
</organism>
<comment type="function">
    <text evidence="1">Catalyzes the sequential NAD-dependent oxidations of L-histidinol to L-histidinaldehyde and then to L-histidine.</text>
</comment>
<comment type="catalytic activity">
    <reaction evidence="1">
        <text>L-histidinol + 2 NAD(+) + H2O = L-histidine + 2 NADH + 3 H(+)</text>
        <dbReference type="Rhea" id="RHEA:20641"/>
        <dbReference type="ChEBI" id="CHEBI:15377"/>
        <dbReference type="ChEBI" id="CHEBI:15378"/>
        <dbReference type="ChEBI" id="CHEBI:57540"/>
        <dbReference type="ChEBI" id="CHEBI:57595"/>
        <dbReference type="ChEBI" id="CHEBI:57699"/>
        <dbReference type="ChEBI" id="CHEBI:57945"/>
        <dbReference type="EC" id="1.1.1.23"/>
    </reaction>
</comment>
<comment type="cofactor">
    <cofactor evidence="1">
        <name>Zn(2+)</name>
        <dbReference type="ChEBI" id="CHEBI:29105"/>
    </cofactor>
    <text evidence="1">Binds 1 zinc ion per subunit.</text>
</comment>
<comment type="pathway">
    <text evidence="1">Amino-acid biosynthesis; L-histidine biosynthesis; L-histidine from 5-phospho-alpha-D-ribose 1-diphosphate: step 9/9.</text>
</comment>
<comment type="similarity">
    <text evidence="1">Belongs to the histidinol dehydrogenase family.</text>
</comment>
<dbReference type="EC" id="1.1.1.23" evidence="1"/>
<dbReference type="EMBL" id="CR936257">
    <property type="protein sequence ID" value="CAI49529.1"/>
    <property type="molecule type" value="Genomic_DNA"/>
</dbReference>
<dbReference type="RefSeq" id="WP_011323154.1">
    <property type="nucleotide sequence ID" value="NC_007426.1"/>
</dbReference>
<dbReference type="SMR" id="Q3IQR5"/>
<dbReference type="STRING" id="348780.NP_2876A"/>
<dbReference type="EnsemblBacteria" id="CAI49529">
    <property type="protein sequence ID" value="CAI49529"/>
    <property type="gene ID" value="NP_2876A"/>
</dbReference>
<dbReference type="GeneID" id="3702817"/>
<dbReference type="KEGG" id="nph:NP_2876A"/>
<dbReference type="eggNOG" id="arCOG04352">
    <property type="taxonomic scope" value="Archaea"/>
</dbReference>
<dbReference type="HOGENOM" id="CLU_006732_3_0_2"/>
<dbReference type="OrthoDB" id="36308at2157"/>
<dbReference type="UniPathway" id="UPA00031">
    <property type="reaction ID" value="UER00014"/>
</dbReference>
<dbReference type="Proteomes" id="UP000002698">
    <property type="component" value="Chromosome"/>
</dbReference>
<dbReference type="GO" id="GO:0005737">
    <property type="term" value="C:cytoplasm"/>
    <property type="evidence" value="ECO:0007669"/>
    <property type="project" value="TreeGrafter"/>
</dbReference>
<dbReference type="GO" id="GO:0004399">
    <property type="term" value="F:histidinol dehydrogenase activity"/>
    <property type="evidence" value="ECO:0007669"/>
    <property type="project" value="UniProtKB-UniRule"/>
</dbReference>
<dbReference type="GO" id="GO:0051287">
    <property type="term" value="F:NAD binding"/>
    <property type="evidence" value="ECO:0007669"/>
    <property type="project" value="InterPro"/>
</dbReference>
<dbReference type="GO" id="GO:0008270">
    <property type="term" value="F:zinc ion binding"/>
    <property type="evidence" value="ECO:0007669"/>
    <property type="project" value="UniProtKB-UniRule"/>
</dbReference>
<dbReference type="GO" id="GO:0000105">
    <property type="term" value="P:L-histidine biosynthetic process"/>
    <property type="evidence" value="ECO:0007669"/>
    <property type="project" value="UniProtKB-UniRule"/>
</dbReference>
<dbReference type="CDD" id="cd06572">
    <property type="entry name" value="Histidinol_dh"/>
    <property type="match status" value="1"/>
</dbReference>
<dbReference type="FunFam" id="3.40.50.1980:FF:000001">
    <property type="entry name" value="Histidinol dehydrogenase"/>
    <property type="match status" value="1"/>
</dbReference>
<dbReference type="FunFam" id="3.40.50.1980:FF:000026">
    <property type="entry name" value="Histidinol dehydrogenase"/>
    <property type="match status" value="1"/>
</dbReference>
<dbReference type="Gene3D" id="1.20.5.1300">
    <property type="match status" value="1"/>
</dbReference>
<dbReference type="Gene3D" id="3.40.50.1980">
    <property type="entry name" value="Nitrogenase molybdenum iron protein domain"/>
    <property type="match status" value="2"/>
</dbReference>
<dbReference type="HAMAP" id="MF_01024">
    <property type="entry name" value="HisD"/>
    <property type="match status" value="1"/>
</dbReference>
<dbReference type="InterPro" id="IPR016161">
    <property type="entry name" value="Ald_DH/histidinol_DH"/>
</dbReference>
<dbReference type="InterPro" id="IPR001692">
    <property type="entry name" value="Histidinol_DH_CS"/>
</dbReference>
<dbReference type="InterPro" id="IPR022695">
    <property type="entry name" value="Histidinol_DH_monofunct"/>
</dbReference>
<dbReference type="InterPro" id="IPR012131">
    <property type="entry name" value="Hstdl_DH"/>
</dbReference>
<dbReference type="NCBIfam" id="TIGR00069">
    <property type="entry name" value="hisD"/>
    <property type="match status" value="1"/>
</dbReference>
<dbReference type="PANTHER" id="PTHR21256:SF2">
    <property type="entry name" value="HISTIDINE BIOSYNTHESIS TRIFUNCTIONAL PROTEIN"/>
    <property type="match status" value="1"/>
</dbReference>
<dbReference type="PANTHER" id="PTHR21256">
    <property type="entry name" value="HISTIDINOL DEHYDROGENASE HDH"/>
    <property type="match status" value="1"/>
</dbReference>
<dbReference type="Pfam" id="PF00815">
    <property type="entry name" value="Histidinol_dh"/>
    <property type="match status" value="1"/>
</dbReference>
<dbReference type="PIRSF" id="PIRSF000099">
    <property type="entry name" value="Histidinol_dh"/>
    <property type="match status" value="1"/>
</dbReference>
<dbReference type="PRINTS" id="PR00083">
    <property type="entry name" value="HOLDHDRGNASE"/>
</dbReference>
<dbReference type="SUPFAM" id="SSF53720">
    <property type="entry name" value="ALDH-like"/>
    <property type="match status" value="1"/>
</dbReference>
<dbReference type="PROSITE" id="PS00611">
    <property type="entry name" value="HISOL_DEHYDROGENASE"/>
    <property type="match status" value="1"/>
</dbReference>
<proteinExistence type="inferred from homology"/>
<evidence type="ECO:0000255" key="1">
    <source>
        <dbReference type="HAMAP-Rule" id="MF_01024"/>
    </source>
</evidence>
<feature type="chain" id="PRO_0000135900" description="Histidinol dehydrogenase">
    <location>
        <begin position="1"/>
        <end position="422"/>
    </location>
</feature>
<feature type="active site" description="Proton acceptor" evidence="1">
    <location>
        <position position="320"/>
    </location>
</feature>
<feature type="active site" description="Proton acceptor" evidence="1">
    <location>
        <position position="321"/>
    </location>
</feature>
<feature type="binding site" evidence="1">
    <location>
        <position position="123"/>
    </location>
    <ligand>
        <name>NAD(+)</name>
        <dbReference type="ChEBI" id="CHEBI:57540"/>
    </ligand>
</feature>
<feature type="binding site" evidence="1">
    <location>
        <position position="183"/>
    </location>
    <ligand>
        <name>NAD(+)</name>
        <dbReference type="ChEBI" id="CHEBI:57540"/>
    </ligand>
</feature>
<feature type="binding site" evidence="1">
    <location>
        <position position="206"/>
    </location>
    <ligand>
        <name>NAD(+)</name>
        <dbReference type="ChEBI" id="CHEBI:57540"/>
    </ligand>
</feature>
<feature type="binding site" evidence="1">
    <location>
        <position position="229"/>
    </location>
    <ligand>
        <name>substrate</name>
    </ligand>
</feature>
<feature type="binding site" evidence="1">
    <location>
        <position position="251"/>
    </location>
    <ligand>
        <name>substrate</name>
    </ligand>
</feature>
<feature type="binding site" evidence="1">
    <location>
        <position position="251"/>
    </location>
    <ligand>
        <name>Zn(2+)</name>
        <dbReference type="ChEBI" id="CHEBI:29105"/>
    </ligand>
</feature>
<feature type="binding site" evidence="1">
    <location>
        <position position="254"/>
    </location>
    <ligand>
        <name>substrate</name>
    </ligand>
</feature>
<feature type="binding site" evidence="1">
    <location>
        <position position="254"/>
    </location>
    <ligand>
        <name>Zn(2+)</name>
        <dbReference type="ChEBI" id="CHEBI:29105"/>
    </ligand>
</feature>
<feature type="binding site" evidence="1">
    <location>
        <position position="321"/>
    </location>
    <ligand>
        <name>substrate</name>
    </ligand>
</feature>
<feature type="binding site" evidence="1">
    <location>
        <position position="354"/>
    </location>
    <ligand>
        <name>substrate</name>
    </ligand>
</feature>
<feature type="binding site" evidence="1">
    <location>
        <position position="354"/>
    </location>
    <ligand>
        <name>Zn(2+)</name>
        <dbReference type="ChEBI" id="CHEBI:29105"/>
    </ligand>
</feature>
<feature type="binding site" evidence="1">
    <location>
        <position position="408"/>
    </location>
    <ligand>
        <name>substrate</name>
    </ligand>
</feature>
<feature type="binding site" evidence="1">
    <location>
        <position position="413"/>
    </location>
    <ligand>
        <name>substrate</name>
    </ligand>
</feature>
<feature type="binding site" evidence="1">
    <location>
        <position position="413"/>
    </location>
    <ligand>
        <name>Zn(2+)</name>
        <dbReference type="ChEBI" id="CHEBI:29105"/>
    </ligand>
</feature>
<gene>
    <name evidence="1" type="primary">hisD</name>
    <name type="ordered locus">NP_2876A</name>
</gene>
<sequence length="422" mass="44465">MNVSAVADLSPEARAALFERDAGIEDARESVRDIIGRVREEGDVALRSYAKEFDDVDIGTLAVTDEAERAYDDLDDDLRDAIETAAENIRTFHERQVPDDWREQFDGRELGRRYRPLERVGVYAPGGTAAYPSSVLMGVIPAVVAGVDHVAVATPPAEELPAATLAAAHVAGADAVYQVGGAQAIAALAYGTESVSAVQKVVGPGNRWVTAAKAEVRGDVEIDFLAGPSELLVVCDDTADPELIAADMVAQAEHDPNASVVCVSDDEATAEAVADACERQATARERTEAIESALENDASAVLCARSMSEAVLFAEEYAAEHLSIVAADEEALLDRIDSAGSVFLGGFSPVAVGDYASGTNHVLPTGGLAKVAGGLSVDHFVRSTTVQKLDEDALSSLRETVTTLARAEGLEAHAESVDKRFD</sequence>
<reference key="1">
    <citation type="journal article" date="2005" name="Genome Res.">
        <title>Living with two extremes: conclusions from the genome sequence of Natronomonas pharaonis.</title>
        <authorList>
            <person name="Falb M."/>
            <person name="Pfeiffer F."/>
            <person name="Palm P."/>
            <person name="Rodewald K."/>
            <person name="Hickmann V."/>
            <person name="Tittor J."/>
            <person name="Oesterhelt D."/>
        </authorList>
    </citation>
    <scope>NUCLEOTIDE SEQUENCE [LARGE SCALE GENOMIC DNA]</scope>
    <source>
        <strain>ATCC 35678 / DSM 2160 / CIP 103997 / JCM 8858 / NBRC 14720 / NCIMB 2260 / Gabara</strain>
    </source>
</reference>
<name>HISX_NATPD</name>